<name>LMRA_LACLA</name>
<accession>Q9CHL8</accession>
<dbReference type="EC" id="7.6.2.2"/>
<dbReference type="EMBL" id="AE005176">
    <property type="protein sequence ID" value="AAK04809.1"/>
    <property type="status" value="ALT_INIT"/>
    <property type="molecule type" value="Genomic_DNA"/>
</dbReference>
<dbReference type="PIR" id="G86713">
    <property type="entry name" value="G86713"/>
</dbReference>
<dbReference type="RefSeq" id="NP_266867.1">
    <property type="nucleotide sequence ID" value="NC_002662.1"/>
</dbReference>
<dbReference type="PDB" id="1MV5">
    <property type="method" value="X-ray"/>
    <property type="resolution" value="3.10 A"/>
    <property type="chains" value="A/B/C/D=349-590"/>
</dbReference>
<dbReference type="PDBsum" id="1MV5"/>
<dbReference type="SMR" id="Q9CHL8"/>
<dbReference type="PaxDb" id="272623-L116532"/>
<dbReference type="EnsemblBacteria" id="AAK04809">
    <property type="protein sequence ID" value="AAK04809"/>
    <property type="gene ID" value="L116532"/>
</dbReference>
<dbReference type="KEGG" id="lla:L116532"/>
<dbReference type="PATRIC" id="fig|272623.7.peg.764"/>
<dbReference type="eggNOG" id="COG1132">
    <property type="taxonomic scope" value="Bacteria"/>
</dbReference>
<dbReference type="HOGENOM" id="CLU_000604_84_3_9"/>
<dbReference type="OrthoDB" id="9770415at2"/>
<dbReference type="EvolutionaryTrace" id="Q9CHL8"/>
<dbReference type="Proteomes" id="UP000002196">
    <property type="component" value="Chromosome"/>
</dbReference>
<dbReference type="GO" id="GO:0005886">
    <property type="term" value="C:plasma membrane"/>
    <property type="evidence" value="ECO:0007669"/>
    <property type="project" value="UniProtKB-SubCell"/>
</dbReference>
<dbReference type="GO" id="GO:0015421">
    <property type="term" value="F:ABC-type oligopeptide transporter activity"/>
    <property type="evidence" value="ECO:0007669"/>
    <property type="project" value="TreeGrafter"/>
</dbReference>
<dbReference type="GO" id="GO:0008559">
    <property type="term" value="F:ABC-type xenobiotic transporter activity"/>
    <property type="evidence" value="ECO:0007669"/>
    <property type="project" value="UniProtKB-EC"/>
</dbReference>
<dbReference type="GO" id="GO:0005524">
    <property type="term" value="F:ATP binding"/>
    <property type="evidence" value="ECO:0007669"/>
    <property type="project" value="UniProtKB-KW"/>
</dbReference>
<dbReference type="GO" id="GO:0016887">
    <property type="term" value="F:ATP hydrolysis activity"/>
    <property type="evidence" value="ECO:0007669"/>
    <property type="project" value="InterPro"/>
</dbReference>
<dbReference type="GO" id="GO:0046677">
    <property type="term" value="P:response to antibiotic"/>
    <property type="evidence" value="ECO:0007669"/>
    <property type="project" value="UniProtKB-KW"/>
</dbReference>
<dbReference type="CDD" id="cd18551">
    <property type="entry name" value="ABC_6TM_LmrA_like"/>
    <property type="match status" value="1"/>
</dbReference>
<dbReference type="FunFam" id="3.40.50.300:FF:000218">
    <property type="entry name" value="Multidrug ABC transporter ATP-binding protein"/>
    <property type="match status" value="1"/>
</dbReference>
<dbReference type="Gene3D" id="1.20.1560.10">
    <property type="entry name" value="ABC transporter type 1, transmembrane domain"/>
    <property type="match status" value="1"/>
</dbReference>
<dbReference type="Gene3D" id="3.40.50.300">
    <property type="entry name" value="P-loop containing nucleotide triphosphate hydrolases"/>
    <property type="match status" value="1"/>
</dbReference>
<dbReference type="InterPro" id="IPR003593">
    <property type="entry name" value="AAA+_ATPase"/>
</dbReference>
<dbReference type="InterPro" id="IPR011527">
    <property type="entry name" value="ABC1_TM_dom"/>
</dbReference>
<dbReference type="InterPro" id="IPR036640">
    <property type="entry name" value="ABC1_TM_sf"/>
</dbReference>
<dbReference type="InterPro" id="IPR003439">
    <property type="entry name" value="ABC_transporter-like_ATP-bd"/>
</dbReference>
<dbReference type="InterPro" id="IPR017871">
    <property type="entry name" value="ABC_transporter-like_CS"/>
</dbReference>
<dbReference type="InterPro" id="IPR027417">
    <property type="entry name" value="P-loop_NTPase"/>
</dbReference>
<dbReference type="InterPro" id="IPR039421">
    <property type="entry name" value="Type_1_exporter"/>
</dbReference>
<dbReference type="PANTHER" id="PTHR43394:SF1">
    <property type="entry name" value="ATP-BINDING CASSETTE SUB-FAMILY B MEMBER 10, MITOCHONDRIAL"/>
    <property type="match status" value="1"/>
</dbReference>
<dbReference type="PANTHER" id="PTHR43394">
    <property type="entry name" value="ATP-DEPENDENT PERMEASE MDL1, MITOCHONDRIAL"/>
    <property type="match status" value="1"/>
</dbReference>
<dbReference type="Pfam" id="PF00664">
    <property type="entry name" value="ABC_membrane"/>
    <property type="match status" value="1"/>
</dbReference>
<dbReference type="Pfam" id="PF00005">
    <property type="entry name" value="ABC_tran"/>
    <property type="match status" value="1"/>
</dbReference>
<dbReference type="SMART" id="SM00382">
    <property type="entry name" value="AAA"/>
    <property type="match status" value="1"/>
</dbReference>
<dbReference type="SUPFAM" id="SSF90123">
    <property type="entry name" value="ABC transporter transmembrane region"/>
    <property type="match status" value="1"/>
</dbReference>
<dbReference type="SUPFAM" id="SSF52540">
    <property type="entry name" value="P-loop containing nucleoside triphosphate hydrolases"/>
    <property type="match status" value="1"/>
</dbReference>
<dbReference type="PROSITE" id="PS50929">
    <property type="entry name" value="ABC_TM1F"/>
    <property type="match status" value="1"/>
</dbReference>
<dbReference type="PROSITE" id="PS00211">
    <property type="entry name" value="ABC_TRANSPORTER_1"/>
    <property type="match status" value="1"/>
</dbReference>
<dbReference type="PROSITE" id="PS50893">
    <property type="entry name" value="ABC_TRANSPORTER_2"/>
    <property type="match status" value="1"/>
</dbReference>
<sequence length="590" mass="64698">MERGPQMANRIEGKAVDKTSIKHFIKLIRAAKPRYLFFIIGILAGIVGTLIQLQVPKMVQPLVNSFGHGVNGGKVALVIALYIGSAAVSAIAAIVLGIFGESVVKNLRTRVWDKMIHLPVKYFDEVKTGEMSSRLANDTTQVKNLIANSIPQAFTSILLLVGSIVFMLQMQWRLTLAMIIAVPVVMLIMFPIMTFGQKIGRTRQDSLANFQGIASESLSEIRLVKSSNAEKQASKKAENDVNALYKIGVKEAIFDGLMSPVMMLSMMLMIFGLLAYGIYLISTGVMSLGTLLGMMMYLMNLIGAVPTVATFFTELAKASGSTGRLTELLDEEQEVLHQGESLDLEGKTLSARHVDFAYDDSEQILRDISFEAQPNSIIAFAGPSGGGKSTIFSLLERFYQPTAGEITIDGQPIDNISLENWRSQIGFVSQDSAIMAGTIRENLTYGLEGDYTDEDLWQVLDLAFARSFVENMPDQLNTEVGERGVKISGGQRQRLAIARAFLRNPKILMLDEATASLDSESESMVQKALDSLMKGRTTLVIAHRLSTIVDADKIYFIEKGQITGSGKHNELVATHPLYAKYVSEQLTVGQ</sequence>
<organism>
    <name type="scientific">Lactococcus lactis subsp. lactis (strain IL1403)</name>
    <name type="common">Streptococcus lactis</name>
    <dbReference type="NCBI Taxonomy" id="272623"/>
    <lineage>
        <taxon>Bacteria</taxon>
        <taxon>Bacillati</taxon>
        <taxon>Bacillota</taxon>
        <taxon>Bacilli</taxon>
        <taxon>Lactobacillales</taxon>
        <taxon>Streptococcaceae</taxon>
        <taxon>Lactococcus</taxon>
    </lineage>
</organism>
<gene>
    <name type="primary">lmrA</name>
    <name type="ordered locus">LL0711</name>
    <name type="ORF">L116532</name>
</gene>
<reference key="1">
    <citation type="journal article" date="2001" name="Genome Res.">
        <title>The complete genome sequence of the lactic acid bacterium Lactococcus lactis ssp. lactis IL1403.</title>
        <authorList>
            <person name="Bolotin A."/>
            <person name="Wincker P."/>
            <person name="Mauger S."/>
            <person name="Jaillon O."/>
            <person name="Malarme K."/>
            <person name="Weissenbach J."/>
            <person name="Ehrlich S.D."/>
            <person name="Sorokin A."/>
        </authorList>
    </citation>
    <scope>NUCLEOTIDE SEQUENCE [LARGE SCALE GENOMIC DNA]</scope>
    <source>
        <strain>IL1403</strain>
    </source>
</reference>
<keyword id="KW-0002">3D-structure</keyword>
<keyword id="KW-0046">Antibiotic resistance</keyword>
<keyword id="KW-0067">ATP-binding</keyword>
<keyword id="KW-1003">Cell membrane</keyword>
<keyword id="KW-0472">Membrane</keyword>
<keyword id="KW-0547">Nucleotide-binding</keyword>
<keyword id="KW-1185">Reference proteome</keyword>
<keyword id="KW-1278">Translocase</keyword>
<keyword id="KW-0812">Transmembrane</keyword>
<keyword id="KW-1133">Transmembrane helix</keyword>
<keyword id="KW-0813">Transport</keyword>
<feature type="chain" id="PRO_0000092413" description="Multidrug resistance ABC transporter ATP-binding and permease protein">
    <location>
        <begin position="1"/>
        <end position="590"/>
    </location>
</feature>
<feature type="transmembrane region" description="Helical" evidence="3">
    <location>
        <begin position="35"/>
        <end position="55"/>
    </location>
</feature>
<feature type="transmembrane region" description="Helical" evidence="3">
    <location>
        <begin position="79"/>
        <end position="99"/>
    </location>
</feature>
<feature type="transmembrane region" description="Helical" evidence="3">
    <location>
        <begin position="150"/>
        <end position="170"/>
    </location>
</feature>
<feature type="transmembrane region" description="Helical" evidence="3">
    <location>
        <begin position="176"/>
        <end position="196"/>
    </location>
</feature>
<feature type="transmembrane region" description="Helical" evidence="3">
    <location>
        <begin position="261"/>
        <end position="281"/>
    </location>
</feature>
<feature type="transmembrane region" description="Helical" evidence="3">
    <location>
        <begin position="292"/>
        <end position="312"/>
    </location>
</feature>
<feature type="domain" description="ABC transmembrane type-1" evidence="3">
    <location>
        <begin position="38"/>
        <end position="317"/>
    </location>
</feature>
<feature type="domain" description="ABC transporter" evidence="2">
    <location>
        <begin position="349"/>
        <end position="584"/>
    </location>
</feature>
<feature type="binding site" evidence="2">
    <location>
        <begin position="382"/>
        <end position="389"/>
    </location>
    <ligand>
        <name>ATP</name>
        <dbReference type="ChEBI" id="CHEBI:30616"/>
    </ligand>
</feature>
<feature type="strand" evidence="5">
    <location>
        <begin position="349"/>
        <end position="356"/>
    </location>
</feature>
<feature type="strand" evidence="5">
    <location>
        <begin position="358"/>
        <end position="362"/>
    </location>
</feature>
<feature type="strand" evidence="5">
    <location>
        <begin position="364"/>
        <end position="372"/>
    </location>
</feature>
<feature type="strand" evidence="5">
    <location>
        <begin position="376"/>
        <end position="381"/>
    </location>
</feature>
<feature type="helix" evidence="5">
    <location>
        <begin position="388"/>
        <end position="395"/>
    </location>
</feature>
<feature type="strand" evidence="5">
    <location>
        <begin position="402"/>
        <end position="404"/>
    </location>
</feature>
<feature type="strand" evidence="5">
    <location>
        <begin position="406"/>
        <end position="408"/>
    </location>
</feature>
<feature type="strand" evidence="5">
    <location>
        <begin position="411"/>
        <end position="413"/>
    </location>
</feature>
<feature type="turn" evidence="5">
    <location>
        <begin position="414"/>
        <end position="416"/>
    </location>
</feature>
<feature type="turn" evidence="5">
    <location>
        <begin position="422"/>
        <end position="424"/>
    </location>
</feature>
<feature type="helix" evidence="5">
    <location>
        <begin position="439"/>
        <end position="442"/>
    </location>
</feature>
<feature type="helix" evidence="5">
    <location>
        <begin position="453"/>
        <end position="463"/>
    </location>
</feature>
<feature type="turn" evidence="5">
    <location>
        <begin position="466"/>
        <end position="470"/>
    </location>
</feature>
<feature type="helix" evidence="5">
    <location>
        <begin position="475"/>
        <end position="477"/>
    </location>
</feature>
<feature type="strand" evidence="5">
    <location>
        <begin position="479"/>
        <end position="481"/>
    </location>
</feature>
<feature type="helix" evidence="5">
    <location>
        <begin position="489"/>
        <end position="503"/>
    </location>
</feature>
<feature type="strand" evidence="5">
    <location>
        <begin position="506"/>
        <end position="511"/>
    </location>
</feature>
<feature type="strand" evidence="5">
    <location>
        <begin position="519"/>
        <end position="521"/>
    </location>
</feature>
<feature type="helix" evidence="5">
    <location>
        <begin position="524"/>
        <end position="533"/>
    </location>
</feature>
<feature type="strand" evidence="5">
    <location>
        <begin position="536"/>
        <end position="541"/>
    </location>
</feature>
<feature type="helix" evidence="5">
    <location>
        <begin position="545"/>
        <end position="550"/>
    </location>
</feature>
<feature type="strand" evidence="5">
    <location>
        <begin position="552"/>
        <end position="558"/>
    </location>
</feature>
<feature type="helix" evidence="5">
    <location>
        <begin position="568"/>
        <end position="574"/>
    </location>
</feature>
<feature type="helix" evidence="5">
    <location>
        <begin position="576"/>
        <end position="583"/>
    </location>
</feature>
<feature type="helix" evidence="5">
    <location>
        <begin position="584"/>
        <end position="588"/>
    </location>
</feature>
<proteinExistence type="evidence at protein level"/>
<comment type="function">
    <text evidence="1">Efflux transporter for a variety of amphiphilic cationic compounds, including antibiotics.</text>
</comment>
<comment type="catalytic activity">
    <reaction>
        <text>ATP + H2O + xenobioticSide 1 = ADP + phosphate + xenobioticSide 2.</text>
        <dbReference type="EC" id="7.6.2.2"/>
    </reaction>
</comment>
<comment type="subunit">
    <text evidence="4">Homodimer.</text>
</comment>
<comment type="subcellular location">
    <subcellularLocation>
        <location evidence="4">Cell membrane</location>
        <topology evidence="4">Multi-pass membrane protein</topology>
    </subcellularLocation>
</comment>
<comment type="similarity">
    <text evidence="4">Belongs to the ABC transporter superfamily. Multidrug exporter LmrA (TC 3.A.1.117.1) family.</text>
</comment>
<comment type="sequence caution" evidence="4">
    <conflict type="erroneous initiation">
        <sequence resource="EMBL-CDS" id="AAK04809"/>
    </conflict>
</comment>
<protein>
    <recommendedName>
        <fullName>Multidrug resistance ABC transporter ATP-binding and permease protein</fullName>
        <ecNumber>7.6.2.2</ecNumber>
    </recommendedName>
</protein>
<evidence type="ECO:0000250" key="1"/>
<evidence type="ECO:0000255" key="2">
    <source>
        <dbReference type="PROSITE-ProRule" id="PRU00434"/>
    </source>
</evidence>
<evidence type="ECO:0000255" key="3">
    <source>
        <dbReference type="PROSITE-ProRule" id="PRU00441"/>
    </source>
</evidence>
<evidence type="ECO:0000305" key="4"/>
<evidence type="ECO:0007829" key="5">
    <source>
        <dbReference type="PDB" id="1MV5"/>
    </source>
</evidence>